<gene>
    <name type="primary">OPG050</name>
    <name type="ORF">C10L</name>
    <name type="ORF">F6L</name>
</gene>
<protein>
    <recommendedName>
        <fullName>Protein OPG050</fullName>
    </recommendedName>
    <alternativeName>
        <fullName>Protein F6</fullName>
    </alternativeName>
</protein>
<reference key="1">
    <citation type="journal article" date="1993" name="Nature">
        <title>Potential virulence determinants in terminal regions of variola smallpox virus genome.</title>
        <authorList>
            <person name="Massung R.F."/>
            <person name="Esposito J.J."/>
            <person name="Liu L.I."/>
            <person name="Qi J."/>
            <person name="Utterback T.R."/>
            <person name="Knight J.C."/>
            <person name="Aubin L."/>
            <person name="Yuran T.E."/>
            <person name="Parsons J.M."/>
            <person name="Loparev V.N."/>
            <person name="Selivanov N.A."/>
            <person name="Cavallaro K.F."/>
            <person name="Kerlavage A.R."/>
            <person name="Mahy B.W.J."/>
            <person name="Venter J.C."/>
        </authorList>
    </citation>
    <scope>NUCLEOTIDE SEQUENCE [GENOMIC DNA]</scope>
    <source>
        <strain>Bangladesh-1975</strain>
    </source>
</reference>
<reference key="2">
    <citation type="submission" date="1994-12" db="EMBL/GenBank/DDBJ databases">
        <authorList>
            <person name="Massung R.F."/>
            <person name="Loparev V.N."/>
            <person name="Knight J.C."/>
            <person name="Chizhikov V.E."/>
            <person name="Parsons J.M."/>
            <person name="Totmenin A.V."/>
            <person name="Shchelkunov S.N."/>
            <person name="Esposito J.J."/>
        </authorList>
    </citation>
    <scope>NUCLEOTIDE SEQUENCE [GENOMIC DNA]</scope>
    <source>
        <strain>Congo-1965</strain>
        <strain>Somalia-1977</strain>
    </source>
</reference>
<evidence type="ECO:0000250" key="1">
    <source>
        <dbReference type="UniProtKB" id="P68603"/>
    </source>
</evidence>
<evidence type="ECO:0000305" key="2"/>
<name>PG050_VARV</name>
<keyword id="KW-0244">Early protein</keyword>
<organismHost>
    <name type="scientific">Homo sapiens</name>
    <name type="common">Human</name>
    <dbReference type="NCBI Taxonomy" id="9606"/>
</organismHost>
<dbReference type="EMBL" id="L22579">
    <property type="protein sequence ID" value="AAA60778.1"/>
    <property type="molecule type" value="Genomic_DNA"/>
</dbReference>
<dbReference type="EMBL" id="U18340">
    <property type="protein sequence ID" value="AAA69441.1"/>
    <property type="molecule type" value="Genomic_DNA"/>
</dbReference>
<dbReference type="EMBL" id="U18337">
    <property type="protein sequence ID" value="AAA69335.1"/>
    <property type="molecule type" value="Genomic_DNA"/>
</dbReference>
<dbReference type="PIR" id="T28468">
    <property type="entry name" value="T28468"/>
</dbReference>
<dbReference type="RefSeq" id="NP_042074.1">
    <property type="nucleotide sequence ID" value="NC_001611.1"/>
</dbReference>
<dbReference type="GeneID" id="1486566"/>
<dbReference type="KEGG" id="vg:1486566"/>
<dbReference type="Proteomes" id="UP000119805">
    <property type="component" value="Segment"/>
</dbReference>
<dbReference type="InterPro" id="IPR009521">
    <property type="entry name" value="Orthopox_F6"/>
</dbReference>
<dbReference type="Pfam" id="PF06601">
    <property type="entry name" value="Orthopox_F6"/>
    <property type="match status" value="1"/>
</dbReference>
<organism>
    <name type="scientific">Variola virus</name>
    <dbReference type="NCBI Taxonomy" id="10255"/>
    <lineage>
        <taxon>Viruses</taxon>
        <taxon>Varidnaviria</taxon>
        <taxon>Bamfordvirae</taxon>
        <taxon>Nucleocytoviricota</taxon>
        <taxon>Pokkesviricetes</taxon>
        <taxon>Chitovirales</taxon>
        <taxon>Poxviridae</taxon>
        <taxon>Chordopoxvirinae</taxon>
        <taxon>Orthopoxvirus</taxon>
    </lineage>
</organism>
<sequence length="72" mass="8415">MSKILTFVKNKIIDLIKNDQIKYSRVITIEESDSLLSVNEVYANHGFDCVEMIDENIINENLEQYKTDSFLQ</sequence>
<feature type="chain" id="PRO_0000448182" description="Protein OPG050">
    <location>
        <begin position="1"/>
        <end position="72"/>
    </location>
</feature>
<proteinExistence type="inferred from homology"/>
<accession>P0DOS0</accession>
<accession>P33866</accession>
<comment type="induction">
    <text evidence="1">Expressed in the early phase of the viral replicative cycle.</text>
</comment>
<comment type="similarity">
    <text evidence="2">Belongs to the orthopoxvirus OPG050 family.</text>
</comment>